<proteinExistence type="inferred from homology"/>
<reference key="1">
    <citation type="journal article" date="2006" name="Proc. Natl. Acad. Sci. U.S.A.">
        <title>Burkholderia xenovorans LB400 harbors a multi-replicon, 9.73-Mbp genome shaped for versatility.</title>
        <authorList>
            <person name="Chain P.S.G."/>
            <person name="Denef V.J."/>
            <person name="Konstantinidis K.T."/>
            <person name="Vergez L.M."/>
            <person name="Agullo L."/>
            <person name="Reyes V.L."/>
            <person name="Hauser L."/>
            <person name="Cordova M."/>
            <person name="Gomez L."/>
            <person name="Gonzalez M."/>
            <person name="Land M."/>
            <person name="Lao V."/>
            <person name="Larimer F."/>
            <person name="LiPuma J.J."/>
            <person name="Mahenthiralingam E."/>
            <person name="Malfatti S.A."/>
            <person name="Marx C.J."/>
            <person name="Parnell J.J."/>
            <person name="Ramette A."/>
            <person name="Richardson P."/>
            <person name="Seeger M."/>
            <person name="Smith D."/>
            <person name="Spilker T."/>
            <person name="Sul W.J."/>
            <person name="Tsoi T.V."/>
            <person name="Ulrich L.E."/>
            <person name="Zhulin I.B."/>
            <person name="Tiedje J.M."/>
        </authorList>
    </citation>
    <scope>NUCLEOTIDE SEQUENCE [LARGE SCALE GENOMIC DNA]</scope>
    <source>
        <strain>LB400</strain>
    </source>
</reference>
<sequence length="53" mass="5752">MLHYAIVFFVIAIIAAVFGFTGIAAGAAEIAKILFYIFLVVFVVTLLLGVFRT</sequence>
<dbReference type="EMBL" id="CP000270">
    <property type="protein sequence ID" value="ABE31496.1"/>
    <property type="molecule type" value="Genomic_DNA"/>
</dbReference>
<dbReference type="RefSeq" id="WP_006052455.1">
    <property type="nucleotide sequence ID" value="NZ_CP008760.1"/>
</dbReference>
<dbReference type="STRING" id="266265.Bxe_A1458"/>
<dbReference type="KEGG" id="bxb:DR64_3622"/>
<dbReference type="KEGG" id="bxe:Bxe_A1458"/>
<dbReference type="eggNOG" id="COG5487">
    <property type="taxonomic scope" value="Bacteria"/>
</dbReference>
<dbReference type="Proteomes" id="UP000001817">
    <property type="component" value="Chromosome 1"/>
</dbReference>
<dbReference type="GO" id="GO:0005886">
    <property type="term" value="C:plasma membrane"/>
    <property type="evidence" value="ECO:0007669"/>
    <property type="project" value="UniProtKB-SubCell"/>
</dbReference>
<dbReference type="HAMAP" id="MF_01361">
    <property type="entry name" value="UPF0391"/>
    <property type="match status" value="1"/>
</dbReference>
<dbReference type="InterPro" id="IPR009760">
    <property type="entry name" value="DUF1328"/>
</dbReference>
<dbReference type="NCBIfam" id="NF010226">
    <property type="entry name" value="PRK13682.1-1"/>
    <property type="match status" value="1"/>
</dbReference>
<dbReference type="NCBIfam" id="NF010229">
    <property type="entry name" value="PRK13682.1-4"/>
    <property type="match status" value="1"/>
</dbReference>
<dbReference type="Pfam" id="PF07043">
    <property type="entry name" value="DUF1328"/>
    <property type="match status" value="1"/>
</dbReference>
<dbReference type="PIRSF" id="PIRSF036466">
    <property type="entry name" value="UCP036466"/>
    <property type="match status" value="1"/>
</dbReference>
<keyword id="KW-1003">Cell membrane</keyword>
<keyword id="KW-0472">Membrane</keyword>
<keyword id="KW-1185">Reference proteome</keyword>
<keyword id="KW-0812">Transmembrane</keyword>
<keyword id="KW-1133">Transmembrane helix</keyword>
<gene>
    <name type="ordered locus">Bxeno_A2958</name>
    <name type="ORF">Bxe_A1458</name>
</gene>
<comment type="subcellular location">
    <subcellularLocation>
        <location evidence="1">Cell membrane</location>
        <topology evidence="1">Multi-pass membrane protein</topology>
    </subcellularLocation>
</comment>
<comment type="similarity">
    <text evidence="1">Belongs to the UPF0391 family.</text>
</comment>
<accession>Q13WP3</accession>
<protein>
    <recommendedName>
        <fullName evidence="1">UPF0391 membrane protein Bxeno_A2958</fullName>
    </recommendedName>
</protein>
<feature type="chain" id="PRO_0000256727" description="UPF0391 membrane protein Bxeno_A2958">
    <location>
        <begin position="1"/>
        <end position="53"/>
    </location>
</feature>
<feature type="transmembrane region" description="Helical" evidence="1">
    <location>
        <begin position="5"/>
        <end position="25"/>
    </location>
</feature>
<feature type="transmembrane region" description="Helical" evidence="1">
    <location>
        <begin position="30"/>
        <end position="50"/>
    </location>
</feature>
<evidence type="ECO:0000255" key="1">
    <source>
        <dbReference type="HAMAP-Rule" id="MF_01361"/>
    </source>
</evidence>
<name>Y2958_PARXL</name>
<organism>
    <name type="scientific">Paraburkholderia xenovorans (strain LB400)</name>
    <dbReference type="NCBI Taxonomy" id="266265"/>
    <lineage>
        <taxon>Bacteria</taxon>
        <taxon>Pseudomonadati</taxon>
        <taxon>Pseudomonadota</taxon>
        <taxon>Betaproteobacteria</taxon>
        <taxon>Burkholderiales</taxon>
        <taxon>Burkholderiaceae</taxon>
        <taxon>Paraburkholderia</taxon>
    </lineage>
</organism>